<proteinExistence type="inferred from homology"/>
<evidence type="ECO:0000255" key="1">
    <source>
        <dbReference type="HAMAP-Rule" id="MF_00489"/>
    </source>
</evidence>
<organism>
    <name type="scientific">Escherichia coli (strain SE11)</name>
    <dbReference type="NCBI Taxonomy" id="409438"/>
    <lineage>
        <taxon>Bacteria</taxon>
        <taxon>Pseudomonadati</taxon>
        <taxon>Pseudomonadota</taxon>
        <taxon>Gammaproteobacteria</taxon>
        <taxon>Enterobacterales</taxon>
        <taxon>Enterobacteriaceae</taxon>
        <taxon>Escherichia</taxon>
    </lineage>
</organism>
<reference key="1">
    <citation type="journal article" date="2008" name="DNA Res.">
        <title>Complete genome sequence and comparative analysis of the wild-type commensal Escherichia coli strain SE11 isolated from a healthy adult.</title>
        <authorList>
            <person name="Oshima K."/>
            <person name="Toh H."/>
            <person name="Ogura Y."/>
            <person name="Sasamoto H."/>
            <person name="Morita H."/>
            <person name="Park S.-H."/>
            <person name="Ooka T."/>
            <person name="Iyoda S."/>
            <person name="Taylor T.D."/>
            <person name="Hayashi T."/>
            <person name="Itoh K."/>
            <person name="Hattori M."/>
        </authorList>
    </citation>
    <scope>NUCLEOTIDE SEQUENCE [LARGE SCALE GENOMIC DNA]</scope>
    <source>
        <strain>SE11</strain>
    </source>
</reference>
<gene>
    <name evidence="1" type="primary">yaiI</name>
    <name type="ordered locus">ECSE_0408</name>
</gene>
<name>YAII_ECOSE</name>
<protein>
    <recommendedName>
        <fullName evidence="1">UPF0178 protein YaiI</fullName>
    </recommendedName>
</protein>
<feature type="chain" id="PRO_1000126190" description="UPF0178 protein YaiI">
    <location>
        <begin position="1"/>
        <end position="152"/>
    </location>
</feature>
<comment type="similarity">
    <text evidence="1">Belongs to the UPF0178 family.</text>
</comment>
<sequence>MTIWVDADACPNVIKEILYRAAERMQMPLVLVANQSLRVPPSRFIRTLRVAAGFDVADNEIVRQCEAGDLVITADIPLAAEAIEKGAAALNPRGERYTPATIRERLTMRDFMDTLRASGIQTGGPDSLSQRDRQAFAAELEKWWLEVQRSRG</sequence>
<dbReference type="EMBL" id="AP009240">
    <property type="protein sequence ID" value="BAG75932.1"/>
    <property type="molecule type" value="Genomic_DNA"/>
</dbReference>
<dbReference type="RefSeq" id="WP_000158159.1">
    <property type="nucleotide sequence ID" value="NC_011415.1"/>
</dbReference>
<dbReference type="KEGG" id="ecy:ECSE_0408"/>
<dbReference type="HOGENOM" id="CLU_106619_2_1_6"/>
<dbReference type="Proteomes" id="UP000008199">
    <property type="component" value="Chromosome"/>
</dbReference>
<dbReference type="CDD" id="cd18720">
    <property type="entry name" value="PIN_YqxD-like"/>
    <property type="match status" value="1"/>
</dbReference>
<dbReference type="HAMAP" id="MF_00489">
    <property type="entry name" value="UPF0178"/>
    <property type="match status" value="1"/>
</dbReference>
<dbReference type="InterPro" id="IPR003791">
    <property type="entry name" value="UPF0178"/>
</dbReference>
<dbReference type="NCBIfam" id="NF001095">
    <property type="entry name" value="PRK00124.1"/>
    <property type="match status" value="1"/>
</dbReference>
<dbReference type="PANTHER" id="PTHR35146">
    <property type="entry name" value="UPF0178 PROTEIN YAII"/>
    <property type="match status" value="1"/>
</dbReference>
<dbReference type="PANTHER" id="PTHR35146:SF1">
    <property type="entry name" value="UPF0178 PROTEIN YAII"/>
    <property type="match status" value="1"/>
</dbReference>
<dbReference type="Pfam" id="PF02639">
    <property type="entry name" value="DUF188"/>
    <property type="match status" value="1"/>
</dbReference>
<accession>B6HZI7</accession>